<accession>Q6BL01</accession>
<sequence length="463" mass="53777">MSEVINLSLSQRANHLSAHLYNNQEAHLPYSKTATVDYDNSVFLSTSKNPNGTVNYSPRSLNYDLTRGYGSLGKYEYYESKADILGQYEVIQTGEKMDKNEYQKALDKGMNKSNTLNVNNTKYWTDYNKLIYSPKSLNQLNNWEYKPHDFGINRSFPNLKFDTFNKGKEEYHQYSEDSLENFRNTLEQCDLIQGVNLISELDSAWGGFTNELLVDLKDEFFNNGINSKYNIWVHGLINHNLNPKLNQLYSRINSIIELSFNSTLFFPMNLNSSSECLGVKMSVIEDELLRGFDKRNIVNEIKIHKNKQASNDFGMVDIDRANLYNLVDNIKIKDKPDSIDLSLSDSKNSKYFAKSYIIPNDQSLAESLNKKENFPINIYKNNRINDILNNDTFPNILEDKSVYSEFSSSNTLKNDLKFYREVIKRSRENEVIEDKFELIEKISELIEEYTIGYDESDEEYDSN</sequence>
<reference key="1">
    <citation type="journal article" date="2004" name="Nature">
        <title>Genome evolution in yeasts.</title>
        <authorList>
            <person name="Dujon B."/>
            <person name="Sherman D."/>
            <person name="Fischer G."/>
            <person name="Durrens P."/>
            <person name="Casaregola S."/>
            <person name="Lafontaine I."/>
            <person name="de Montigny J."/>
            <person name="Marck C."/>
            <person name="Neuveglise C."/>
            <person name="Talla E."/>
            <person name="Goffard N."/>
            <person name="Frangeul L."/>
            <person name="Aigle M."/>
            <person name="Anthouard V."/>
            <person name="Babour A."/>
            <person name="Barbe V."/>
            <person name="Barnay S."/>
            <person name="Blanchin S."/>
            <person name="Beckerich J.-M."/>
            <person name="Beyne E."/>
            <person name="Bleykasten C."/>
            <person name="Boisrame A."/>
            <person name="Boyer J."/>
            <person name="Cattolico L."/>
            <person name="Confanioleri F."/>
            <person name="de Daruvar A."/>
            <person name="Despons L."/>
            <person name="Fabre E."/>
            <person name="Fairhead C."/>
            <person name="Ferry-Dumazet H."/>
            <person name="Groppi A."/>
            <person name="Hantraye F."/>
            <person name="Hennequin C."/>
            <person name="Jauniaux N."/>
            <person name="Joyet P."/>
            <person name="Kachouri R."/>
            <person name="Kerrest A."/>
            <person name="Koszul R."/>
            <person name="Lemaire M."/>
            <person name="Lesur I."/>
            <person name="Ma L."/>
            <person name="Muller H."/>
            <person name="Nicaud J.-M."/>
            <person name="Nikolski M."/>
            <person name="Oztas S."/>
            <person name="Ozier-Kalogeropoulos O."/>
            <person name="Pellenz S."/>
            <person name="Potier S."/>
            <person name="Richard G.-F."/>
            <person name="Straub M.-L."/>
            <person name="Suleau A."/>
            <person name="Swennen D."/>
            <person name="Tekaia F."/>
            <person name="Wesolowski-Louvel M."/>
            <person name="Westhof E."/>
            <person name="Wirth B."/>
            <person name="Zeniou-Meyer M."/>
            <person name="Zivanovic Y."/>
            <person name="Bolotin-Fukuhara M."/>
            <person name="Thierry A."/>
            <person name="Bouchier C."/>
            <person name="Caudron B."/>
            <person name="Scarpelli C."/>
            <person name="Gaillardin C."/>
            <person name="Weissenbach J."/>
            <person name="Wincker P."/>
            <person name="Souciet J.-L."/>
        </authorList>
    </citation>
    <scope>NUCLEOTIDE SEQUENCE [LARGE SCALE GENOMIC DNA]</scope>
    <source>
        <strain>ATCC 36239 / CBS 767 / BCRC 21394 / JCM 1990 / NBRC 0083 / IGC 2968</strain>
    </source>
</reference>
<name>DML1_DEBHA</name>
<proteinExistence type="inferred from homology"/>
<evidence type="ECO:0000250" key="1"/>
<evidence type="ECO:0000305" key="2"/>
<gene>
    <name type="primary">DML1</name>
    <name type="ordered locus">DEHA2F17446g</name>
</gene>
<keyword id="KW-0496">Mitochondrion</keyword>
<keyword id="KW-1185">Reference proteome</keyword>
<comment type="function">
    <text evidence="1">Involved in the partitioning of the mitochondrial organelle and mitochondrial DNA (mtDNA) inheritance.</text>
</comment>
<comment type="subcellular location">
    <subcellularLocation>
        <location evidence="1">Mitochondrion</location>
    </subcellularLocation>
</comment>
<comment type="similarity">
    <text evidence="2">Belongs to the misato family.</text>
</comment>
<comment type="sequence caution" evidence="2">
    <conflict type="erroneous gene model prediction">
        <sequence resource="EMBL-CDS" id="CAG89502"/>
    </conflict>
</comment>
<dbReference type="EMBL" id="CR382138">
    <property type="protein sequence ID" value="CAG89502.2"/>
    <property type="status" value="ALT_SEQ"/>
    <property type="molecule type" value="Genomic_DNA"/>
</dbReference>
<dbReference type="RefSeq" id="XP_461120.2">
    <property type="nucleotide sequence ID" value="XM_461120.2"/>
</dbReference>
<dbReference type="FunCoup" id="Q6BL01">
    <property type="interactions" value="78"/>
</dbReference>
<dbReference type="STRING" id="284592.Q6BL01"/>
<dbReference type="GeneID" id="2903670"/>
<dbReference type="KEGG" id="dha:DEHA2F17446g"/>
<dbReference type="eggNOG" id="KOG2530">
    <property type="taxonomic scope" value="Eukaryota"/>
</dbReference>
<dbReference type="HOGENOM" id="CLU_022511_2_1_1"/>
<dbReference type="InParanoid" id="Q6BL01"/>
<dbReference type="OrthoDB" id="271881at2759"/>
<dbReference type="Proteomes" id="UP000000599">
    <property type="component" value="Chromosome F"/>
</dbReference>
<dbReference type="GO" id="GO:0005739">
    <property type="term" value="C:mitochondrion"/>
    <property type="evidence" value="ECO:0007669"/>
    <property type="project" value="UniProtKB-SubCell"/>
</dbReference>
<dbReference type="GO" id="GO:0007005">
    <property type="term" value="P:mitochondrion organization"/>
    <property type="evidence" value="ECO:0007669"/>
    <property type="project" value="InterPro"/>
</dbReference>
<dbReference type="Gene3D" id="3.40.50.1440">
    <property type="entry name" value="Tubulin/FtsZ, GTPase domain"/>
    <property type="match status" value="1"/>
</dbReference>
<dbReference type="InterPro" id="IPR049942">
    <property type="entry name" value="DML1/Misato"/>
</dbReference>
<dbReference type="InterPro" id="IPR029209">
    <property type="entry name" value="DML1/Misato_tubulin"/>
</dbReference>
<dbReference type="InterPro" id="IPR019605">
    <property type="entry name" value="Misato_II_tubulin-like"/>
</dbReference>
<dbReference type="InterPro" id="IPR036525">
    <property type="entry name" value="Tubulin/FtsZ_GTPase_sf"/>
</dbReference>
<dbReference type="PANTHER" id="PTHR13391">
    <property type="entry name" value="MITOCHONDRIAL DISTRIBUTION REGULATOR MISATO"/>
    <property type="match status" value="1"/>
</dbReference>
<dbReference type="PANTHER" id="PTHR13391:SF0">
    <property type="entry name" value="PROTEIN MISATO HOMOLOG 1"/>
    <property type="match status" value="1"/>
</dbReference>
<dbReference type="Pfam" id="PF10644">
    <property type="entry name" value="Misat_Tub_SegII"/>
    <property type="match status" value="1"/>
</dbReference>
<dbReference type="Pfam" id="PF14881">
    <property type="entry name" value="Tubulin_3"/>
    <property type="match status" value="1"/>
</dbReference>
<dbReference type="SUPFAM" id="SSF52490">
    <property type="entry name" value="Tubulin nucleotide-binding domain-like"/>
    <property type="match status" value="1"/>
</dbReference>
<protein>
    <recommendedName>
        <fullName>Protein DML1</fullName>
    </recommendedName>
</protein>
<feature type="chain" id="PRO_0000285334" description="Protein DML1">
    <location>
        <begin position="1"/>
        <end position="463"/>
    </location>
</feature>
<organism>
    <name type="scientific">Debaryomyces hansenii (strain ATCC 36239 / CBS 767 / BCRC 21394 / JCM 1990 / NBRC 0083 / IGC 2968)</name>
    <name type="common">Yeast</name>
    <name type="synonym">Torulaspora hansenii</name>
    <dbReference type="NCBI Taxonomy" id="284592"/>
    <lineage>
        <taxon>Eukaryota</taxon>
        <taxon>Fungi</taxon>
        <taxon>Dikarya</taxon>
        <taxon>Ascomycota</taxon>
        <taxon>Saccharomycotina</taxon>
        <taxon>Pichiomycetes</taxon>
        <taxon>Debaryomycetaceae</taxon>
        <taxon>Debaryomyces</taxon>
    </lineage>
</organism>